<keyword id="KW-1185">Reference proteome</keyword>
<keyword id="KW-0687">Ribonucleoprotein</keyword>
<keyword id="KW-0689">Ribosomal protein</keyword>
<evidence type="ECO:0000255" key="1">
    <source>
        <dbReference type="HAMAP-Rule" id="MF_00573"/>
    </source>
</evidence>
<evidence type="ECO:0000305" key="2"/>
<accession>Q8TYY6</accession>
<protein>
    <recommendedName>
        <fullName evidence="1">Large ribosomal subunit protein eL33</fullName>
    </recommendedName>
    <alternativeName>
        <fullName evidence="2">50S ribosomal protein L35Ae</fullName>
    </alternativeName>
</protein>
<comment type="similarity">
    <text evidence="1">Belongs to the eukaryotic ribosomal protein eL33 family.</text>
</comment>
<dbReference type="EMBL" id="AE009439">
    <property type="protein sequence ID" value="AAM01372.1"/>
    <property type="molecule type" value="Genomic_DNA"/>
</dbReference>
<dbReference type="RefSeq" id="WP_011018527.1">
    <property type="nucleotide sequence ID" value="NC_003551.1"/>
</dbReference>
<dbReference type="SMR" id="Q8TYY6"/>
<dbReference type="STRING" id="190192.MK0155"/>
<dbReference type="PaxDb" id="190192-MK0155"/>
<dbReference type="EnsemblBacteria" id="AAM01372">
    <property type="protein sequence ID" value="AAM01372"/>
    <property type="gene ID" value="MK0155"/>
</dbReference>
<dbReference type="GeneID" id="1477458"/>
<dbReference type="KEGG" id="mka:MK0155"/>
<dbReference type="HOGENOM" id="CLU_100745_3_1_2"/>
<dbReference type="InParanoid" id="Q8TYY6"/>
<dbReference type="OrthoDB" id="14403at2157"/>
<dbReference type="Proteomes" id="UP000001826">
    <property type="component" value="Chromosome"/>
</dbReference>
<dbReference type="GO" id="GO:1990904">
    <property type="term" value="C:ribonucleoprotein complex"/>
    <property type="evidence" value="ECO:0007669"/>
    <property type="project" value="UniProtKB-KW"/>
</dbReference>
<dbReference type="GO" id="GO:0005840">
    <property type="term" value="C:ribosome"/>
    <property type="evidence" value="ECO:0007669"/>
    <property type="project" value="UniProtKB-KW"/>
</dbReference>
<dbReference type="GO" id="GO:0003735">
    <property type="term" value="F:structural constituent of ribosome"/>
    <property type="evidence" value="ECO:0007669"/>
    <property type="project" value="InterPro"/>
</dbReference>
<dbReference type="GO" id="GO:0006412">
    <property type="term" value="P:translation"/>
    <property type="evidence" value="ECO:0007669"/>
    <property type="project" value="UniProtKB-UniRule"/>
</dbReference>
<dbReference type="Gene3D" id="2.40.10.190">
    <property type="entry name" value="translation elongation factor selb, chain A, domain 4"/>
    <property type="match status" value="1"/>
</dbReference>
<dbReference type="HAMAP" id="MF_00573">
    <property type="entry name" value="Ribosomal_eL33"/>
    <property type="match status" value="1"/>
</dbReference>
<dbReference type="InterPro" id="IPR001780">
    <property type="entry name" value="Ribosomal_eL33"/>
</dbReference>
<dbReference type="InterPro" id="IPR018266">
    <property type="entry name" value="Ribosomal_eL33_CS"/>
</dbReference>
<dbReference type="InterPro" id="IPR038661">
    <property type="entry name" value="Ribosomal_eL33_sf"/>
</dbReference>
<dbReference type="InterPro" id="IPR009000">
    <property type="entry name" value="Transl_B-barrel_sf"/>
</dbReference>
<dbReference type="NCBIfam" id="NF003326">
    <property type="entry name" value="PRK04337.1"/>
    <property type="match status" value="1"/>
</dbReference>
<dbReference type="PANTHER" id="PTHR10902">
    <property type="entry name" value="60S RIBOSOMAL PROTEIN L35A"/>
    <property type="match status" value="1"/>
</dbReference>
<dbReference type="Pfam" id="PF01247">
    <property type="entry name" value="Ribosomal_L35Ae"/>
    <property type="match status" value="1"/>
</dbReference>
<dbReference type="SUPFAM" id="SSF50447">
    <property type="entry name" value="Translation proteins"/>
    <property type="match status" value="1"/>
</dbReference>
<dbReference type="PROSITE" id="PS01105">
    <property type="entry name" value="RIBOSOMAL_L35AE"/>
    <property type="match status" value="1"/>
</dbReference>
<name>RL35A_METKA</name>
<sequence length="90" mass="10053">MSEVKRGVIVNYRMGRHTQDPRQCIIEFEGVESRSEAAQLIGKEVIWKHPETGKVIRGKVVDTHGNNGAVRVRFERGLPGQALGTEVTLK</sequence>
<feature type="chain" id="PRO_0000192810" description="Large ribosomal subunit protein eL33">
    <location>
        <begin position="1"/>
        <end position="90"/>
    </location>
</feature>
<organism>
    <name type="scientific">Methanopyrus kandleri (strain AV19 / DSM 6324 / JCM 9639 / NBRC 100938)</name>
    <dbReference type="NCBI Taxonomy" id="190192"/>
    <lineage>
        <taxon>Archaea</taxon>
        <taxon>Methanobacteriati</taxon>
        <taxon>Methanobacteriota</taxon>
        <taxon>Methanomada group</taxon>
        <taxon>Methanopyri</taxon>
        <taxon>Methanopyrales</taxon>
        <taxon>Methanopyraceae</taxon>
        <taxon>Methanopyrus</taxon>
    </lineage>
</organism>
<reference key="1">
    <citation type="journal article" date="2002" name="Proc. Natl. Acad. Sci. U.S.A.">
        <title>The complete genome of hyperthermophile Methanopyrus kandleri AV19 and monophyly of archaeal methanogens.</title>
        <authorList>
            <person name="Slesarev A.I."/>
            <person name="Mezhevaya K.V."/>
            <person name="Makarova K.S."/>
            <person name="Polushin N.N."/>
            <person name="Shcherbinina O.V."/>
            <person name="Shakhova V.V."/>
            <person name="Belova G.I."/>
            <person name="Aravind L."/>
            <person name="Natale D.A."/>
            <person name="Rogozin I.B."/>
            <person name="Tatusov R.L."/>
            <person name="Wolf Y.I."/>
            <person name="Stetter K.O."/>
            <person name="Malykh A.G."/>
            <person name="Koonin E.V."/>
            <person name="Kozyavkin S.A."/>
        </authorList>
    </citation>
    <scope>NUCLEOTIDE SEQUENCE [LARGE SCALE GENOMIC DNA]</scope>
    <source>
        <strain>AV19 / DSM 6324 / JCM 9639 / NBRC 100938</strain>
    </source>
</reference>
<gene>
    <name evidence="1" type="primary">rpl35ae</name>
    <name type="ordered locus">MK0155</name>
</gene>
<proteinExistence type="inferred from homology"/>